<comment type="function">
    <text evidence="1">NAD-binding protein involved in the addition of a carboxymethylaminomethyl (cmnm) group at the wobble position (U34) of certain tRNAs, forming tRNA-cmnm(5)s(2)U34.</text>
</comment>
<comment type="cofactor">
    <cofactor evidence="1">
        <name>FAD</name>
        <dbReference type="ChEBI" id="CHEBI:57692"/>
    </cofactor>
</comment>
<comment type="subunit">
    <text evidence="1">Homodimer. Heterotetramer of two MnmE and two MnmG subunits.</text>
</comment>
<comment type="subcellular location">
    <subcellularLocation>
        <location evidence="1">Cytoplasm</location>
    </subcellularLocation>
</comment>
<comment type="similarity">
    <text evidence="1">Belongs to the MnmG family.</text>
</comment>
<feature type="chain" id="PRO_0000117096" description="tRNA uridine 5-carboxymethylaminomethyl modification enzyme MnmG">
    <location>
        <begin position="1"/>
        <end position="625"/>
    </location>
</feature>
<feature type="region of interest" description="Disordered" evidence="2">
    <location>
        <begin position="204"/>
        <end position="226"/>
    </location>
</feature>
<feature type="binding site" evidence="1">
    <location>
        <begin position="10"/>
        <end position="15"/>
    </location>
    <ligand>
        <name>FAD</name>
        <dbReference type="ChEBI" id="CHEBI:57692"/>
    </ligand>
</feature>
<feature type="binding site" evidence="1">
    <location>
        <position position="122"/>
    </location>
    <ligand>
        <name>FAD</name>
        <dbReference type="ChEBI" id="CHEBI:57692"/>
    </ligand>
</feature>
<feature type="binding site" evidence="1">
    <location>
        <position position="181"/>
    </location>
    <ligand>
        <name>FAD</name>
        <dbReference type="ChEBI" id="CHEBI:57692"/>
    </ligand>
</feature>
<feature type="binding site" evidence="1">
    <location>
        <begin position="273"/>
        <end position="287"/>
    </location>
    <ligand>
        <name>NAD(+)</name>
        <dbReference type="ChEBI" id="CHEBI:57540"/>
    </ligand>
</feature>
<feature type="binding site" evidence="1">
    <location>
        <position position="370"/>
    </location>
    <ligand>
        <name>FAD</name>
        <dbReference type="ChEBI" id="CHEBI:57692"/>
    </ligand>
</feature>
<accession>Q5HAN4</accession>
<accession>Q5FDA4</accession>
<organism>
    <name type="scientific">Ehrlichia ruminantium (strain Welgevonden)</name>
    <dbReference type="NCBI Taxonomy" id="254945"/>
    <lineage>
        <taxon>Bacteria</taxon>
        <taxon>Pseudomonadati</taxon>
        <taxon>Pseudomonadota</taxon>
        <taxon>Alphaproteobacteria</taxon>
        <taxon>Rickettsiales</taxon>
        <taxon>Anaplasmataceae</taxon>
        <taxon>Ehrlichia</taxon>
    </lineage>
</organism>
<sequence length="625" mass="69444">MKKYDVVVIGGGHSGCEAAAAAARIGAKTLLITHSISTIGEMSCNPAIGGIAKGIVVREVDALDGLMGKVIDNASINSTILNRSKGPAVWGPRAQADRDLYRHAMQNSILNYPNLTVLEASVENFTTTDNQELPTINSVITADQEVIYTKKLILTTGTFLQGTIHIGSYNTPAGRFNEQSSVGLAKTLASYNFKLGRLRTGTPPRLDRNSINFSGLQEQKGDTPPSPFSYMSESINLPQISCYLTATNTKTHEVIKNNLHKAAASNLLKEIKAPRYCPSIEEKVRRFSERNSHQVFLEPEGLNSEIIYPNGITTSSPLDVQQTMLKTISGLENVKIVRSGYSVEYNFIDPRELYHTLETKKIRGLYCAGQINGTTGYEEAAGQGIIAGINAALSLNSNYEPFILKRNDAYIGVMIDDLVTLGTSEPYRLFTSRAEYRLRLRSDNADLRLTELGYKVSAVSYQRYLTLNRKKEEVTKLTNILKETVILPSQLSQHGVCISQDGRKRSAFDLLSNPNINMNILSKIFNQIKNYHASTIQQVEIEAKYAPYFIKQELDIQSFIAEENTHIPHDIEFSQIHGLSTEIQEKLQYMKPPSIGSARRIPGVTPAAITNILFYLRYHKNKKIL</sequence>
<dbReference type="EMBL" id="CR767821">
    <property type="protein sequence ID" value="CAH58378.1"/>
    <property type="molecule type" value="Genomic_DNA"/>
</dbReference>
<dbReference type="EMBL" id="CR925678">
    <property type="protein sequence ID" value="CAI27171.1"/>
    <property type="molecule type" value="Genomic_DNA"/>
</dbReference>
<dbReference type="RefSeq" id="WP_011155326.1">
    <property type="nucleotide sequence ID" value="NC_005295.2"/>
</dbReference>
<dbReference type="SMR" id="Q5HAN4"/>
<dbReference type="GeneID" id="33058103"/>
<dbReference type="KEGG" id="eru:Erum6460"/>
<dbReference type="KEGG" id="erw:ERWE_CDS_06770"/>
<dbReference type="eggNOG" id="COG0445">
    <property type="taxonomic scope" value="Bacteria"/>
</dbReference>
<dbReference type="HOGENOM" id="CLU_007831_2_2_5"/>
<dbReference type="Proteomes" id="UP000001021">
    <property type="component" value="Chromosome"/>
</dbReference>
<dbReference type="GO" id="GO:0005737">
    <property type="term" value="C:cytoplasm"/>
    <property type="evidence" value="ECO:0007669"/>
    <property type="project" value="UniProtKB-SubCell"/>
</dbReference>
<dbReference type="GO" id="GO:0050660">
    <property type="term" value="F:flavin adenine dinucleotide binding"/>
    <property type="evidence" value="ECO:0007669"/>
    <property type="project" value="UniProtKB-UniRule"/>
</dbReference>
<dbReference type="GO" id="GO:0030488">
    <property type="term" value="P:tRNA methylation"/>
    <property type="evidence" value="ECO:0007669"/>
    <property type="project" value="TreeGrafter"/>
</dbReference>
<dbReference type="GO" id="GO:0002098">
    <property type="term" value="P:tRNA wobble uridine modification"/>
    <property type="evidence" value="ECO:0007669"/>
    <property type="project" value="InterPro"/>
</dbReference>
<dbReference type="FunFam" id="3.50.50.60:FF:000082">
    <property type="entry name" value="protein MTO1 homolog, mitochondrial isoform X1"/>
    <property type="match status" value="1"/>
</dbReference>
<dbReference type="FunFam" id="1.10.150.570:FF:000001">
    <property type="entry name" value="tRNA uridine 5-carboxymethylaminomethyl modification enzyme MnmG"/>
    <property type="match status" value="1"/>
</dbReference>
<dbReference type="FunFam" id="3.50.50.60:FF:000002">
    <property type="entry name" value="tRNA uridine 5-carboxymethylaminomethyl modification enzyme MnmG"/>
    <property type="match status" value="1"/>
</dbReference>
<dbReference type="Gene3D" id="3.50.50.60">
    <property type="entry name" value="FAD/NAD(P)-binding domain"/>
    <property type="match status" value="2"/>
</dbReference>
<dbReference type="Gene3D" id="1.10.150.570">
    <property type="entry name" value="GidA associated domain, C-terminal subdomain"/>
    <property type="match status" value="1"/>
</dbReference>
<dbReference type="Gene3D" id="1.10.10.1800">
    <property type="entry name" value="tRNA uridine 5-carboxymethylaminomethyl modification enzyme MnmG/GidA"/>
    <property type="match status" value="1"/>
</dbReference>
<dbReference type="HAMAP" id="MF_00129">
    <property type="entry name" value="MnmG_GidA"/>
    <property type="match status" value="1"/>
</dbReference>
<dbReference type="InterPro" id="IPR036188">
    <property type="entry name" value="FAD/NAD-bd_sf"/>
</dbReference>
<dbReference type="InterPro" id="IPR049312">
    <property type="entry name" value="GIDA_C_N"/>
</dbReference>
<dbReference type="InterPro" id="IPR004416">
    <property type="entry name" value="MnmG"/>
</dbReference>
<dbReference type="InterPro" id="IPR002218">
    <property type="entry name" value="MnmG-rel"/>
</dbReference>
<dbReference type="InterPro" id="IPR020595">
    <property type="entry name" value="MnmG-rel_CS"/>
</dbReference>
<dbReference type="InterPro" id="IPR026904">
    <property type="entry name" value="MnmG_C"/>
</dbReference>
<dbReference type="InterPro" id="IPR047001">
    <property type="entry name" value="MnmG_C_subdom"/>
</dbReference>
<dbReference type="InterPro" id="IPR044920">
    <property type="entry name" value="MnmG_C_subdom_sf"/>
</dbReference>
<dbReference type="InterPro" id="IPR040131">
    <property type="entry name" value="MnmG_N"/>
</dbReference>
<dbReference type="NCBIfam" id="TIGR00136">
    <property type="entry name" value="mnmG_gidA"/>
    <property type="match status" value="1"/>
</dbReference>
<dbReference type="PANTHER" id="PTHR11806">
    <property type="entry name" value="GLUCOSE INHIBITED DIVISION PROTEIN A"/>
    <property type="match status" value="1"/>
</dbReference>
<dbReference type="PANTHER" id="PTHR11806:SF0">
    <property type="entry name" value="PROTEIN MTO1 HOMOLOG, MITOCHONDRIAL"/>
    <property type="match status" value="1"/>
</dbReference>
<dbReference type="Pfam" id="PF01134">
    <property type="entry name" value="GIDA"/>
    <property type="match status" value="1"/>
</dbReference>
<dbReference type="Pfam" id="PF21680">
    <property type="entry name" value="GIDA_C_1st"/>
    <property type="match status" value="1"/>
</dbReference>
<dbReference type="Pfam" id="PF13932">
    <property type="entry name" value="SAM_GIDA_C"/>
    <property type="match status" value="1"/>
</dbReference>
<dbReference type="SMART" id="SM01228">
    <property type="entry name" value="GIDA_assoc_3"/>
    <property type="match status" value="1"/>
</dbReference>
<dbReference type="SUPFAM" id="SSF51905">
    <property type="entry name" value="FAD/NAD(P)-binding domain"/>
    <property type="match status" value="1"/>
</dbReference>
<dbReference type="PROSITE" id="PS01280">
    <property type="entry name" value="GIDA_1"/>
    <property type="match status" value="1"/>
</dbReference>
<dbReference type="PROSITE" id="PS01281">
    <property type="entry name" value="GIDA_2"/>
    <property type="match status" value="1"/>
</dbReference>
<proteinExistence type="inferred from homology"/>
<evidence type="ECO:0000255" key="1">
    <source>
        <dbReference type="HAMAP-Rule" id="MF_00129"/>
    </source>
</evidence>
<evidence type="ECO:0000256" key="2">
    <source>
        <dbReference type="SAM" id="MobiDB-lite"/>
    </source>
</evidence>
<name>MNMG_EHRRW</name>
<protein>
    <recommendedName>
        <fullName evidence="1">tRNA uridine 5-carboxymethylaminomethyl modification enzyme MnmG</fullName>
    </recommendedName>
    <alternativeName>
        <fullName evidence="1">Glucose-inhibited division protein A</fullName>
    </alternativeName>
</protein>
<reference key="1">
    <citation type="journal article" date="2005" name="Proc. Natl. Acad. Sci. U.S.A.">
        <title>The genome of the heartwater agent Ehrlichia ruminantium contains multiple tandem repeats of actively variable copy number.</title>
        <authorList>
            <person name="Collins N.E."/>
            <person name="Liebenberg J."/>
            <person name="de Villiers E.P."/>
            <person name="Brayton K.A."/>
            <person name="Louw E."/>
            <person name="Pretorius A."/>
            <person name="Faber F.E."/>
            <person name="van Heerden H."/>
            <person name="Josemans A."/>
            <person name="van Kleef M."/>
            <person name="Steyn H.C."/>
            <person name="van Strijp M.F."/>
            <person name="Zweygarth E."/>
            <person name="Jongejan F."/>
            <person name="Maillard J.C."/>
            <person name="Berthier D."/>
            <person name="Botha M."/>
            <person name="Joubert F."/>
            <person name="Corton C.H."/>
            <person name="Thomson N.R."/>
            <person name="Allsopp M.T."/>
            <person name="Allsopp B.A."/>
        </authorList>
    </citation>
    <scope>NUCLEOTIDE SEQUENCE [LARGE SCALE GENOMIC DNA]</scope>
    <source>
        <strain>Welgevonden</strain>
    </source>
</reference>
<reference key="2">
    <citation type="journal article" date="2006" name="J. Bacteriol.">
        <title>Comparative genomic analysis of three strains of Ehrlichia ruminantium reveals an active process of genome size plasticity.</title>
        <authorList>
            <person name="Frutos R."/>
            <person name="Viari A."/>
            <person name="Ferraz C."/>
            <person name="Morgat A."/>
            <person name="Eychenie S."/>
            <person name="Kandassamy Y."/>
            <person name="Chantal I."/>
            <person name="Bensaid A."/>
            <person name="Coissac E."/>
            <person name="Vachiery N."/>
            <person name="Demaille J."/>
            <person name="Martinez D."/>
        </authorList>
    </citation>
    <scope>NUCLEOTIDE SEQUENCE [LARGE SCALE GENOMIC DNA]</scope>
    <source>
        <strain>Welgevonden</strain>
    </source>
</reference>
<gene>
    <name evidence="1" type="primary">mnmG</name>
    <name evidence="1" type="synonym">gidA</name>
    <name type="ordered locus">Erum6460</name>
    <name type="ordered locus">ERWE_CDS_06770</name>
</gene>
<keyword id="KW-0963">Cytoplasm</keyword>
<keyword id="KW-0274">FAD</keyword>
<keyword id="KW-0285">Flavoprotein</keyword>
<keyword id="KW-0520">NAD</keyword>
<keyword id="KW-0819">tRNA processing</keyword>